<comment type="function">
    <text evidence="1">Digests double-stranded RNA. Involved in the processing of primary rRNA transcript to yield the immediate precursors to the large and small rRNAs (23S and 16S). Processes some mRNAs, and tRNAs when they are encoded in the rRNA operon. Processes pre-crRNA and tracrRNA of type II CRISPR loci if present in the organism.</text>
</comment>
<comment type="catalytic activity">
    <reaction evidence="1">
        <text>Endonucleolytic cleavage to 5'-phosphomonoester.</text>
        <dbReference type="EC" id="3.1.26.3"/>
    </reaction>
</comment>
<comment type="cofactor">
    <cofactor evidence="1">
        <name>Mg(2+)</name>
        <dbReference type="ChEBI" id="CHEBI:18420"/>
    </cofactor>
</comment>
<comment type="subunit">
    <text evidence="1">Homodimer.</text>
</comment>
<comment type="subcellular location">
    <subcellularLocation>
        <location evidence="1">Cytoplasm</location>
    </subcellularLocation>
</comment>
<comment type="similarity">
    <text evidence="1">Belongs to the ribonuclease III family.</text>
</comment>
<accession>B2IPN5</accession>
<evidence type="ECO:0000255" key="1">
    <source>
        <dbReference type="HAMAP-Rule" id="MF_00104"/>
    </source>
</evidence>
<organism>
    <name type="scientific">Streptococcus pneumoniae (strain CGSP14)</name>
    <dbReference type="NCBI Taxonomy" id="516950"/>
    <lineage>
        <taxon>Bacteria</taxon>
        <taxon>Bacillati</taxon>
        <taxon>Bacillota</taxon>
        <taxon>Bacilli</taxon>
        <taxon>Lactobacillales</taxon>
        <taxon>Streptococcaceae</taxon>
        <taxon>Streptococcus</taxon>
    </lineage>
</organism>
<keyword id="KW-0963">Cytoplasm</keyword>
<keyword id="KW-0255">Endonuclease</keyword>
<keyword id="KW-0378">Hydrolase</keyword>
<keyword id="KW-0460">Magnesium</keyword>
<keyword id="KW-0479">Metal-binding</keyword>
<keyword id="KW-0507">mRNA processing</keyword>
<keyword id="KW-0540">Nuclease</keyword>
<keyword id="KW-0694">RNA-binding</keyword>
<keyword id="KW-0698">rRNA processing</keyword>
<keyword id="KW-0699">rRNA-binding</keyword>
<keyword id="KW-0819">tRNA processing</keyword>
<sequence>MKELQTVLKNHFAIEFTDKKLLETAFTHTSYANEHRLLKISHNERLEFLGDAVLQLLISEYLYKKYPKKPEGDLSKLRAMIVREESLAGFARDCQFDQFIKLGKGEEKSGGRNRDTILGDAFEAFLGALLLDKDVAKVKEFIYQVMIPKVEAGEFEMITDYKTHLQELLQVNGDVAIRYQVISETGPAHDKVFDVEVLVEGKSIGQGQGRSKKLAEQEAAKNAVEKGLDSCI</sequence>
<feature type="chain" id="PRO_1000094137" description="Ribonuclease 3">
    <location>
        <begin position="1"/>
        <end position="232"/>
    </location>
</feature>
<feature type="domain" description="RNase III" evidence="1">
    <location>
        <begin position="5"/>
        <end position="134"/>
    </location>
</feature>
<feature type="domain" description="DRBM" evidence="1">
    <location>
        <begin position="160"/>
        <end position="229"/>
    </location>
</feature>
<feature type="active site" evidence="1">
    <location>
        <position position="51"/>
    </location>
</feature>
<feature type="active site" evidence="1">
    <location>
        <position position="123"/>
    </location>
</feature>
<feature type="binding site" evidence="1">
    <location>
        <position position="47"/>
    </location>
    <ligand>
        <name>Mg(2+)</name>
        <dbReference type="ChEBI" id="CHEBI:18420"/>
    </ligand>
</feature>
<feature type="binding site" evidence="1">
    <location>
        <position position="120"/>
    </location>
    <ligand>
        <name>Mg(2+)</name>
        <dbReference type="ChEBI" id="CHEBI:18420"/>
    </ligand>
</feature>
<feature type="binding site" evidence="1">
    <location>
        <position position="123"/>
    </location>
    <ligand>
        <name>Mg(2+)</name>
        <dbReference type="ChEBI" id="CHEBI:18420"/>
    </ligand>
</feature>
<reference key="1">
    <citation type="journal article" date="2009" name="BMC Genomics">
        <title>Genome evolution driven by host adaptations results in a more virulent and antimicrobial-resistant Streptococcus pneumoniae serotype 14.</title>
        <authorList>
            <person name="Ding F."/>
            <person name="Tang P."/>
            <person name="Hsu M.-H."/>
            <person name="Cui P."/>
            <person name="Hu S."/>
            <person name="Yu J."/>
            <person name="Chiu C.-H."/>
        </authorList>
    </citation>
    <scope>NUCLEOTIDE SEQUENCE [LARGE SCALE GENOMIC DNA]</scope>
    <source>
        <strain>CGSP14</strain>
    </source>
</reference>
<gene>
    <name evidence="1" type="primary">rnc</name>
    <name type="ordered locus">SPCG_1055</name>
</gene>
<dbReference type="EC" id="3.1.26.3" evidence="1"/>
<dbReference type="EMBL" id="CP001033">
    <property type="protein sequence ID" value="ACB90307.1"/>
    <property type="molecule type" value="Genomic_DNA"/>
</dbReference>
<dbReference type="RefSeq" id="WP_000661498.1">
    <property type="nucleotide sequence ID" value="NC_010582.1"/>
</dbReference>
<dbReference type="SMR" id="B2IPN5"/>
<dbReference type="KEGG" id="spw:SPCG_1055"/>
<dbReference type="HOGENOM" id="CLU_000907_1_3_9"/>
<dbReference type="GO" id="GO:0005737">
    <property type="term" value="C:cytoplasm"/>
    <property type="evidence" value="ECO:0007669"/>
    <property type="project" value="UniProtKB-SubCell"/>
</dbReference>
<dbReference type="GO" id="GO:0003725">
    <property type="term" value="F:double-stranded RNA binding"/>
    <property type="evidence" value="ECO:0007669"/>
    <property type="project" value="TreeGrafter"/>
</dbReference>
<dbReference type="GO" id="GO:0046872">
    <property type="term" value="F:metal ion binding"/>
    <property type="evidence" value="ECO:0007669"/>
    <property type="project" value="UniProtKB-KW"/>
</dbReference>
<dbReference type="GO" id="GO:0004525">
    <property type="term" value="F:ribonuclease III activity"/>
    <property type="evidence" value="ECO:0007669"/>
    <property type="project" value="UniProtKB-UniRule"/>
</dbReference>
<dbReference type="GO" id="GO:0019843">
    <property type="term" value="F:rRNA binding"/>
    <property type="evidence" value="ECO:0007669"/>
    <property type="project" value="UniProtKB-KW"/>
</dbReference>
<dbReference type="GO" id="GO:0006397">
    <property type="term" value="P:mRNA processing"/>
    <property type="evidence" value="ECO:0007669"/>
    <property type="project" value="UniProtKB-UniRule"/>
</dbReference>
<dbReference type="GO" id="GO:0010468">
    <property type="term" value="P:regulation of gene expression"/>
    <property type="evidence" value="ECO:0007669"/>
    <property type="project" value="TreeGrafter"/>
</dbReference>
<dbReference type="GO" id="GO:0006364">
    <property type="term" value="P:rRNA processing"/>
    <property type="evidence" value="ECO:0007669"/>
    <property type="project" value="UniProtKB-UniRule"/>
</dbReference>
<dbReference type="GO" id="GO:0008033">
    <property type="term" value="P:tRNA processing"/>
    <property type="evidence" value="ECO:0007669"/>
    <property type="project" value="UniProtKB-KW"/>
</dbReference>
<dbReference type="CDD" id="cd10845">
    <property type="entry name" value="DSRM_RNAse_III_family"/>
    <property type="match status" value="1"/>
</dbReference>
<dbReference type="CDD" id="cd00593">
    <property type="entry name" value="RIBOc"/>
    <property type="match status" value="1"/>
</dbReference>
<dbReference type="FunFam" id="1.10.1520.10:FF:000001">
    <property type="entry name" value="Ribonuclease 3"/>
    <property type="match status" value="1"/>
</dbReference>
<dbReference type="FunFam" id="3.30.160.20:FF:000003">
    <property type="entry name" value="Ribonuclease 3"/>
    <property type="match status" value="1"/>
</dbReference>
<dbReference type="Gene3D" id="3.30.160.20">
    <property type="match status" value="1"/>
</dbReference>
<dbReference type="Gene3D" id="1.10.1520.10">
    <property type="entry name" value="Ribonuclease III domain"/>
    <property type="match status" value="1"/>
</dbReference>
<dbReference type="HAMAP" id="MF_00104">
    <property type="entry name" value="RNase_III"/>
    <property type="match status" value="1"/>
</dbReference>
<dbReference type="InterPro" id="IPR014720">
    <property type="entry name" value="dsRBD_dom"/>
</dbReference>
<dbReference type="InterPro" id="IPR011907">
    <property type="entry name" value="RNase_III"/>
</dbReference>
<dbReference type="InterPro" id="IPR000999">
    <property type="entry name" value="RNase_III_dom"/>
</dbReference>
<dbReference type="InterPro" id="IPR036389">
    <property type="entry name" value="RNase_III_sf"/>
</dbReference>
<dbReference type="NCBIfam" id="TIGR02191">
    <property type="entry name" value="RNaseIII"/>
    <property type="match status" value="1"/>
</dbReference>
<dbReference type="PANTHER" id="PTHR11207:SF0">
    <property type="entry name" value="RIBONUCLEASE 3"/>
    <property type="match status" value="1"/>
</dbReference>
<dbReference type="PANTHER" id="PTHR11207">
    <property type="entry name" value="RIBONUCLEASE III"/>
    <property type="match status" value="1"/>
</dbReference>
<dbReference type="Pfam" id="PF00035">
    <property type="entry name" value="dsrm"/>
    <property type="match status" value="1"/>
</dbReference>
<dbReference type="Pfam" id="PF14622">
    <property type="entry name" value="Ribonucleas_3_3"/>
    <property type="match status" value="1"/>
</dbReference>
<dbReference type="SMART" id="SM00358">
    <property type="entry name" value="DSRM"/>
    <property type="match status" value="1"/>
</dbReference>
<dbReference type="SMART" id="SM00535">
    <property type="entry name" value="RIBOc"/>
    <property type="match status" value="1"/>
</dbReference>
<dbReference type="SUPFAM" id="SSF54768">
    <property type="entry name" value="dsRNA-binding domain-like"/>
    <property type="match status" value="1"/>
</dbReference>
<dbReference type="SUPFAM" id="SSF69065">
    <property type="entry name" value="RNase III domain-like"/>
    <property type="match status" value="1"/>
</dbReference>
<dbReference type="PROSITE" id="PS50137">
    <property type="entry name" value="DS_RBD"/>
    <property type="match status" value="1"/>
</dbReference>
<dbReference type="PROSITE" id="PS00517">
    <property type="entry name" value="RNASE_3_1"/>
    <property type="match status" value="1"/>
</dbReference>
<dbReference type="PROSITE" id="PS50142">
    <property type="entry name" value="RNASE_3_2"/>
    <property type="match status" value="1"/>
</dbReference>
<proteinExistence type="inferred from homology"/>
<protein>
    <recommendedName>
        <fullName evidence="1">Ribonuclease 3</fullName>
        <ecNumber evidence="1">3.1.26.3</ecNumber>
    </recommendedName>
    <alternativeName>
        <fullName evidence="1">Ribonuclease III</fullName>
        <shortName evidence="1">RNase III</shortName>
    </alternativeName>
</protein>
<name>RNC_STRPS</name>